<dbReference type="EMBL" id="CP000921">
    <property type="protein sequence ID" value="ACO23091.1"/>
    <property type="molecule type" value="Genomic_DNA"/>
</dbReference>
<dbReference type="RefSeq" id="WP_000817882.1">
    <property type="nucleotide sequence ID" value="NC_012469.1"/>
</dbReference>
<dbReference type="SMR" id="C1CRN6"/>
<dbReference type="KEGG" id="snt:SPT_1185"/>
<dbReference type="HOGENOM" id="CLU_027562_9_6_9"/>
<dbReference type="GO" id="GO:0005737">
    <property type="term" value="C:cytoplasm"/>
    <property type="evidence" value="ECO:0007669"/>
    <property type="project" value="UniProtKB-SubCell"/>
</dbReference>
<dbReference type="GO" id="GO:0003677">
    <property type="term" value="F:DNA binding"/>
    <property type="evidence" value="ECO:0007669"/>
    <property type="project" value="UniProtKB-KW"/>
</dbReference>
<dbReference type="GO" id="GO:0009037">
    <property type="term" value="F:tyrosine-based site-specific recombinase activity"/>
    <property type="evidence" value="ECO:0007669"/>
    <property type="project" value="UniProtKB-UniRule"/>
</dbReference>
<dbReference type="GO" id="GO:0051301">
    <property type="term" value="P:cell division"/>
    <property type="evidence" value="ECO:0007669"/>
    <property type="project" value="UniProtKB-KW"/>
</dbReference>
<dbReference type="GO" id="GO:0007059">
    <property type="term" value="P:chromosome segregation"/>
    <property type="evidence" value="ECO:0007669"/>
    <property type="project" value="UniProtKB-UniRule"/>
</dbReference>
<dbReference type="GO" id="GO:0006310">
    <property type="term" value="P:DNA recombination"/>
    <property type="evidence" value="ECO:0007669"/>
    <property type="project" value="UniProtKB-UniRule"/>
</dbReference>
<dbReference type="Gene3D" id="1.10.150.130">
    <property type="match status" value="1"/>
</dbReference>
<dbReference type="Gene3D" id="1.10.443.10">
    <property type="entry name" value="Intergrase catalytic core"/>
    <property type="match status" value="1"/>
</dbReference>
<dbReference type="HAMAP" id="MF_01816">
    <property type="entry name" value="Recomb_XerS"/>
    <property type="match status" value="1"/>
</dbReference>
<dbReference type="InterPro" id="IPR044068">
    <property type="entry name" value="CB"/>
</dbReference>
<dbReference type="InterPro" id="IPR011010">
    <property type="entry name" value="DNA_brk_join_enz"/>
</dbReference>
<dbReference type="InterPro" id="IPR013762">
    <property type="entry name" value="Integrase-like_cat_sf"/>
</dbReference>
<dbReference type="InterPro" id="IPR002104">
    <property type="entry name" value="Integrase_catalytic"/>
</dbReference>
<dbReference type="InterPro" id="IPR010998">
    <property type="entry name" value="Integrase_recombinase_N"/>
</dbReference>
<dbReference type="InterPro" id="IPR004107">
    <property type="entry name" value="Integrase_SAM-like_N"/>
</dbReference>
<dbReference type="InterPro" id="IPR023670">
    <property type="entry name" value="Recomb_XerS"/>
</dbReference>
<dbReference type="InterPro" id="IPR050090">
    <property type="entry name" value="Tyrosine_recombinase_XerCD"/>
</dbReference>
<dbReference type="NCBIfam" id="NF003462">
    <property type="entry name" value="PRK05084.1"/>
    <property type="match status" value="1"/>
</dbReference>
<dbReference type="PANTHER" id="PTHR30349">
    <property type="entry name" value="PHAGE INTEGRASE-RELATED"/>
    <property type="match status" value="1"/>
</dbReference>
<dbReference type="PANTHER" id="PTHR30349:SF77">
    <property type="entry name" value="TYROSINE RECOMBINASE XERC"/>
    <property type="match status" value="1"/>
</dbReference>
<dbReference type="Pfam" id="PF02899">
    <property type="entry name" value="Phage_int_SAM_1"/>
    <property type="match status" value="1"/>
</dbReference>
<dbReference type="Pfam" id="PF00589">
    <property type="entry name" value="Phage_integrase"/>
    <property type="match status" value="1"/>
</dbReference>
<dbReference type="SUPFAM" id="SSF56349">
    <property type="entry name" value="DNA breaking-rejoining enzymes"/>
    <property type="match status" value="1"/>
</dbReference>
<dbReference type="PROSITE" id="PS51900">
    <property type="entry name" value="CB"/>
    <property type="match status" value="1"/>
</dbReference>
<dbReference type="PROSITE" id="PS51898">
    <property type="entry name" value="TYR_RECOMBINASE"/>
    <property type="match status" value="1"/>
</dbReference>
<comment type="function">
    <text evidence="1">Site-specific tyrosine recombinase, which acts by catalyzing the cutting and rejoining of the recombining DNA molecules. Essential to convert dimers of the bacterial chromosome into monomers to permit their segregation at cell division.</text>
</comment>
<comment type="activity regulation">
    <text evidence="1">FtsK is required for recombination.</text>
</comment>
<comment type="subcellular location">
    <subcellularLocation>
        <location evidence="1">Cytoplasm</location>
    </subcellularLocation>
</comment>
<comment type="similarity">
    <text evidence="1">Belongs to the 'phage' integrase family. XerS subfamily.</text>
</comment>
<name>XERS_STRZT</name>
<protein>
    <recommendedName>
        <fullName evidence="1">Tyrosine recombinase XerS</fullName>
    </recommendedName>
</protein>
<sequence length="356" mass="41171">MKREILLERIDKLKQLMPWYVLEYYQSKLAVPYSFTTLYEYLKEYDRFFSWVLESGISNADKISDIPLSVLENMSKKDMESFILYLRERPLLNANTTKQGVSQTTINRTLSALSSLYKYLTEEVENDQGEPYFYRNVMKKVSTKKKKETLAARAENIKQKLFLGDETEGFLTYIDQEHPQQLSNRALSSFNKNKERDLAIIALLLASGVRLSEAVNLDLRDLNLKMMVIDVTRKGGKRDSVNVAAFAKPYLENYLAIRNQRYKTEKTDTALFLTLYRGVPNRIDASSVEKMVAKYSEDFKVRVTPHKLRHTLATRLYDATKSQVLVSHQLGHASTQVTDLYTHIVNDEQKNALDSL</sequence>
<feature type="chain" id="PRO_1000187920" description="Tyrosine recombinase XerS">
    <location>
        <begin position="1"/>
        <end position="356"/>
    </location>
</feature>
<feature type="domain" description="Core-binding (CB)" evidence="3">
    <location>
        <begin position="16"/>
        <end position="121"/>
    </location>
</feature>
<feature type="domain" description="Tyr recombinase" evidence="2">
    <location>
        <begin position="169"/>
        <end position="354"/>
    </location>
</feature>
<feature type="active site" evidence="1">
    <location>
        <position position="210"/>
    </location>
</feature>
<feature type="active site" evidence="1">
    <location>
        <position position="234"/>
    </location>
</feature>
<feature type="active site" evidence="1">
    <location>
        <position position="306"/>
    </location>
</feature>
<feature type="active site" evidence="1">
    <location>
        <position position="309"/>
    </location>
</feature>
<feature type="active site" evidence="1">
    <location>
        <position position="332"/>
    </location>
</feature>
<feature type="active site" description="O-(3'-phospho-DNA)-tyrosine intermediate" evidence="1">
    <location>
        <position position="341"/>
    </location>
</feature>
<reference key="1">
    <citation type="journal article" date="2010" name="Genome Biol.">
        <title>Structure and dynamics of the pan-genome of Streptococcus pneumoniae and closely related species.</title>
        <authorList>
            <person name="Donati C."/>
            <person name="Hiller N.L."/>
            <person name="Tettelin H."/>
            <person name="Muzzi A."/>
            <person name="Croucher N.J."/>
            <person name="Angiuoli S.V."/>
            <person name="Oggioni M."/>
            <person name="Dunning Hotopp J.C."/>
            <person name="Hu F.Z."/>
            <person name="Riley D.R."/>
            <person name="Covacci A."/>
            <person name="Mitchell T.J."/>
            <person name="Bentley S.D."/>
            <person name="Kilian M."/>
            <person name="Ehrlich G.D."/>
            <person name="Rappuoli R."/>
            <person name="Moxon E.R."/>
            <person name="Masignani V."/>
        </authorList>
    </citation>
    <scope>NUCLEOTIDE SEQUENCE [LARGE SCALE GENOMIC DNA]</scope>
    <source>
        <strain>Taiwan19F-14</strain>
    </source>
</reference>
<accession>C1CRN6</accession>
<evidence type="ECO:0000255" key="1">
    <source>
        <dbReference type="HAMAP-Rule" id="MF_01816"/>
    </source>
</evidence>
<evidence type="ECO:0000255" key="2">
    <source>
        <dbReference type="PROSITE-ProRule" id="PRU01246"/>
    </source>
</evidence>
<evidence type="ECO:0000255" key="3">
    <source>
        <dbReference type="PROSITE-ProRule" id="PRU01248"/>
    </source>
</evidence>
<gene>
    <name evidence="1" type="primary">xerS</name>
    <name type="ordered locus">SPT_1185</name>
</gene>
<proteinExistence type="inferred from homology"/>
<organism>
    <name type="scientific">Streptococcus pneumoniae (strain Taiwan19F-14)</name>
    <dbReference type="NCBI Taxonomy" id="487213"/>
    <lineage>
        <taxon>Bacteria</taxon>
        <taxon>Bacillati</taxon>
        <taxon>Bacillota</taxon>
        <taxon>Bacilli</taxon>
        <taxon>Lactobacillales</taxon>
        <taxon>Streptococcaceae</taxon>
        <taxon>Streptococcus</taxon>
    </lineage>
</organism>
<keyword id="KW-0131">Cell cycle</keyword>
<keyword id="KW-0132">Cell division</keyword>
<keyword id="KW-0159">Chromosome partition</keyword>
<keyword id="KW-0963">Cytoplasm</keyword>
<keyword id="KW-0229">DNA integration</keyword>
<keyword id="KW-0233">DNA recombination</keyword>
<keyword id="KW-0238">DNA-binding</keyword>